<accession>Q05865</accession>
<keyword id="KW-0067">ATP-binding</keyword>
<keyword id="KW-0289">Folate biosynthesis</keyword>
<keyword id="KW-0436">Ligase</keyword>
<keyword id="KW-0460">Magnesium</keyword>
<keyword id="KW-0479">Metal-binding</keyword>
<keyword id="KW-0547">Nucleotide-binding</keyword>
<keyword id="KW-0554">One-carbon metabolism</keyword>
<keyword id="KW-1185">Reference proteome</keyword>
<proteinExistence type="inferred from homology"/>
<sequence length="430" mass="48165">MFTAYQDARSWIHGRLKFGVKPGLGRMKQLMARLGHPEKKIRAFHVAGTNGKGSTVAFIRSMLQEAGYTVGTFTSPYIITFNERISVNGIPISDEEWTALVNQMKPHVEALDQTEYGQPTEFEIMTACAFLYFAEFHKVDFVIFETGLGGRFDSTNVVEPLLTVITSIGHDHMNILGNTIEEIAGEKAGIIKEGIPIVTAVTQPEALQVIRHEAERHAAPFQSLHDACVIFNEEALPAGEQFSFKTEEKCYEDIRTSLIGTHQRQNAALSILAAEWLNKENIAHISDEALRSGLVKAAWPGRLELVQEHPPVYLDGAHNEEGVEKLAETMKQRFANSRISVVFSALKDKPYQNMIKRLETIAHAIHFASFDFPRASLAKDLYDASEISNKSWSEDPDDVIKFIESKKGSNEIVLITGSLYFISDIRKRLK</sequence>
<reference key="1">
    <citation type="journal article" date="1993" name="J. Bacteriol.">
        <title>Sporulation gene spoIIB from Bacillus subtilis.</title>
        <authorList>
            <person name="Margolis P.S."/>
            <person name="Driks A."/>
            <person name="Losick R."/>
        </authorList>
    </citation>
    <scope>NUCLEOTIDE SEQUENCE [GENOMIC DNA]</scope>
    <source>
        <strain>168 / PY79</strain>
    </source>
</reference>
<reference key="2">
    <citation type="journal article" date="1997" name="Nature">
        <title>The complete genome sequence of the Gram-positive bacterium Bacillus subtilis.</title>
        <authorList>
            <person name="Kunst F."/>
            <person name="Ogasawara N."/>
            <person name="Moszer I."/>
            <person name="Albertini A.M."/>
            <person name="Alloni G."/>
            <person name="Azevedo V."/>
            <person name="Bertero M.G."/>
            <person name="Bessieres P."/>
            <person name="Bolotin A."/>
            <person name="Borchert S."/>
            <person name="Borriss R."/>
            <person name="Boursier L."/>
            <person name="Brans A."/>
            <person name="Braun M."/>
            <person name="Brignell S.C."/>
            <person name="Bron S."/>
            <person name="Brouillet S."/>
            <person name="Bruschi C.V."/>
            <person name="Caldwell B."/>
            <person name="Capuano V."/>
            <person name="Carter N.M."/>
            <person name="Choi S.-K."/>
            <person name="Codani J.-J."/>
            <person name="Connerton I.F."/>
            <person name="Cummings N.J."/>
            <person name="Daniel R.A."/>
            <person name="Denizot F."/>
            <person name="Devine K.M."/>
            <person name="Duesterhoeft A."/>
            <person name="Ehrlich S.D."/>
            <person name="Emmerson P.T."/>
            <person name="Entian K.-D."/>
            <person name="Errington J."/>
            <person name="Fabret C."/>
            <person name="Ferrari E."/>
            <person name="Foulger D."/>
            <person name="Fritz C."/>
            <person name="Fujita M."/>
            <person name="Fujita Y."/>
            <person name="Fuma S."/>
            <person name="Galizzi A."/>
            <person name="Galleron N."/>
            <person name="Ghim S.-Y."/>
            <person name="Glaser P."/>
            <person name="Goffeau A."/>
            <person name="Golightly E.J."/>
            <person name="Grandi G."/>
            <person name="Guiseppi G."/>
            <person name="Guy B.J."/>
            <person name="Haga K."/>
            <person name="Haiech J."/>
            <person name="Harwood C.R."/>
            <person name="Henaut A."/>
            <person name="Hilbert H."/>
            <person name="Holsappel S."/>
            <person name="Hosono S."/>
            <person name="Hullo M.-F."/>
            <person name="Itaya M."/>
            <person name="Jones L.-M."/>
            <person name="Joris B."/>
            <person name="Karamata D."/>
            <person name="Kasahara Y."/>
            <person name="Klaerr-Blanchard M."/>
            <person name="Klein C."/>
            <person name="Kobayashi Y."/>
            <person name="Koetter P."/>
            <person name="Koningstein G."/>
            <person name="Krogh S."/>
            <person name="Kumano M."/>
            <person name="Kurita K."/>
            <person name="Lapidus A."/>
            <person name="Lardinois S."/>
            <person name="Lauber J."/>
            <person name="Lazarevic V."/>
            <person name="Lee S.-M."/>
            <person name="Levine A."/>
            <person name="Liu H."/>
            <person name="Masuda S."/>
            <person name="Mauel C."/>
            <person name="Medigue C."/>
            <person name="Medina N."/>
            <person name="Mellado R.P."/>
            <person name="Mizuno M."/>
            <person name="Moestl D."/>
            <person name="Nakai S."/>
            <person name="Noback M."/>
            <person name="Noone D."/>
            <person name="O'Reilly M."/>
            <person name="Ogawa K."/>
            <person name="Ogiwara A."/>
            <person name="Oudega B."/>
            <person name="Park S.-H."/>
            <person name="Parro V."/>
            <person name="Pohl T.M."/>
            <person name="Portetelle D."/>
            <person name="Porwollik S."/>
            <person name="Prescott A.M."/>
            <person name="Presecan E."/>
            <person name="Pujic P."/>
            <person name="Purnelle B."/>
            <person name="Rapoport G."/>
            <person name="Rey M."/>
            <person name="Reynolds S."/>
            <person name="Rieger M."/>
            <person name="Rivolta C."/>
            <person name="Rocha E."/>
            <person name="Roche B."/>
            <person name="Rose M."/>
            <person name="Sadaie Y."/>
            <person name="Sato T."/>
            <person name="Scanlan E."/>
            <person name="Schleich S."/>
            <person name="Schroeter R."/>
            <person name="Scoffone F."/>
            <person name="Sekiguchi J."/>
            <person name="Sekowska A."/>
            <person name="Seror S.J."/>
            <person name="Serror P."/>
            <person name="Shin B.-S."/>
            <person name="Soldo B."/>
            <person name="Sorokin A."/>
            <person name="Tacconi E."/>
            <person name="Takagi T."/>
            <person name="Takahashi H."/>
            <person name="Takemaru K."/>
            <person name="Takeuchi M."/>
            <person name="Tamakoshi A."/>
            <person name="Tanaka T."/>
            <person name="Terpstra P."/>
            <person name="Tognoni A."/>
            <person name="Tosato V."/>
            <person name="Uchiyama S."/>
            <person name="Vandenbol M."/>
            <person name="Vannier F."/>
            <person name="Vassarotti A."/>
            <person name="Viari A."/>
            <person name="Wambutt R."/>
            <person name="Wedler E."/>
            <person name="Wedler H."/>
            <person name="Weitzenegger T."/>
            <person name="Winters P."/>
            <person name="Wipat A."/>
            <person name="Yamamoto H."/>
            <person name="Yamane K."/>
            <person name="Yasumoto K."/>
            <person name="Yata K."/>
            <person name="Yoshida K."/>
            <person name="Yoshikawa H.-F."/>
            <person name="Zumstein E."/>
            <person name="Yoshikawa H."/>
            <person name="Danchin A."/>
        </authorList>
    </citation>
    <scope>NUCLEOTIDE SEQUENCE [LARGE SCALE GENOMIC DNA]</scope>
    <source>
        <strain>168</strain>
    </source>
</reference>
<reference key="3">
    <citation type="journal article" date="1989" name="J. Bacteriol.">
        <title>Molecular cloning and characterization of comC, a late competence gene of Bacillus subtilis.</title>
        <authorList>
            <person name="Mohan S."/>
            <person name="Aghion J."/>
            <person name="Guillen N."/>
            <person name="Dubnau D.A."/>
        </authorList>
    </citation>
    <scope>NUCLEOTIDE SEQUENCE [GENOMIC DNA] OF 294-429</scope>
</reference>
<comment type="function">
    <text evidence="1">Functions in two distinct reactions of the de novo folate biosynthetic pathway. Catalyzes the addition of a glutamate residue to dihydropteroate (7,8-dihydropteroate or H2Pte) to form dihydrofolate (7,8-dihydrofolate monoglutamate or H2Pte-Glu). Also catalyzes successive additions of L-glutamate to tetrahydrofolate, leading to folylpolyglutamate derivatives.</text>
</comment>
<comment type="catalytic activity">
    <reaction evidence="1">
        <text>7,8-dihydropteroate + L-glutamate + ATP = 7,8-dihydrofolate + ADP + phosphate + H(+)</text>
        <dbReference type="Rhea" id="RHEA:23584"/>
        <dbReference type="ChEBI" id="CHEBI:15378"/>
        <dbReference type="ChEBI" id="CHEBI:17839"/>
        <dbReference type="ChEBI" id="CHEBI:29985"/>
        <dbReference type="ChEBI" id="CHEBI:30616"/>
        <dbReference type="ChEBI" id="CHEBI:43474"/>
        <dbReference type="ChEBI" id="CHEBI:57451"/>
        <dbReference type="ChEBI" id="CHEBI:456216"/>
        <dbReference type="EC" id="6.3.2.12"/>
    </reaction>
</comment>
<comment type="catalytic activity">
    <reaction evidence="1">
        <text>(6S)-5,6,7,8-tetrahydrofolyl-(gamma-L-Glu)(n) + L-glutamate + ATP = (6S)-5,6,7,8-tetrahydrofolyl-(gamma-L-Glu)(n+1) + ADP + phosphate + H(+)</text>
        <dbReference type="Rhea" id="RHEA:10580"/>
        <dbReference type="Rhea" id="RHEA-COMP:14738"/>
        <dbReference type="Rhea" id="RHEA-COMP:14740"/>
        <dbReference type="ChEBI" id="CHEBI:15378"/>
        <dbReference type="ChEBI" id="CHEBI:29985"/>
        <dbReference type="ChEBI" id="CHEBI:30616"/>
        <dbReference type="ChEBI" id="CHEBI:43474"/>
        <dbReference type="ChEBI" id="CHEBI:141005"/>
        <dbReference type="ChEBI" id="CHEBI:456216"/>
        <dbReference type="EC" id="6.3.2.17"/>
    </reaction>
</comment>
<comment type="cofactor">
    <cofactor evidence="1">
        <name>Mg(2+)</name>
        <dbReference type="ChEBI" id="CHEBI:18420"/>
    </cofactor>
    <text evidence="1">Binds 2 Mg(2+) ions per subunit.</text>
</comment>
<comment type="pathway">
    <text evidence="1">Cofactor biosynthesis; tetrahydrofolate biosynthesis; 7,8-dihydrofolate from 2-amino-4-hydroxy-6-hydroxymethyl-7,8-dihydropteridine diphosphate and 4-aminobenzoate: step 2/2.</text>
</comment>
<comment type="pathway">
    <text evidence="1">Cofactor biosynthesis; tetrahydrofolylpolyglutamate biosynthesis.</text>
</comment>
<comment type="subunit">
    <text evidence="1">Monomer.</text>
</comment>
<comment type="similarity">
    <text evidence="2">Belongs to the folylpolyglutamate synthase family.</text>
</comment>
<comment type="sequence caution" evidence="2">
    <conflict type="erroneous initiation">
        <sequence resource="EMBL-CDS" id="AAA83364"/>
    </conflict>
</comment>
<name>FOLC_BACSU</name>
<gene>
    <name type="primary">folC</name>
    <name type="ordered locus">BSU28080</name>
</gene>
<protein>
    <recommendedName>
        <fullName>Dihydrofolate synthase/folylpolyglutamate synthase</fullName>
        <shortName>DHFS / FPGS</shortName>
        <ecNumber>6.3.2.12</ecNumber>
        <ecNumber>6.3.2.17</ecNumber>
    </recommendedName>
    <alternativeName>
        <fullName>Folylpoly-gamma-glutamate synthetase-dihydrofolate synthetase</fullName>
    </alternativeName>
    <alternativeName>
        <fullName>Folylpolyglutamate synthetase</fullName>
    </alternativeName>
    <alternativeName>
        <fullName>Tetrahydrofolylpolyglutamate synthase</fullName>
    </alternativeName>
</protein>
<feature type="chain" id="PRO_0000168299" description="Dihydrofolate synthase/folylpolyglutamate synthase">
    <location>
        <begin position="1"/>
        <end position="430"/>
    </location>
</feature>
<feature type="binding site" evidence="1">
    <location>
        <begin position="51"/>
        <end position="54"/>
    </location>
    <ligand>
        <name>ATP</name>
        <dbReference type="ChEBI" id="CHEBI:30616"/>
    </ligand>
</feature>
<feature type="binding site" evidence="1">
    <location>
        <position position="75"/>
    </location>
    <ligand>
        <name>Mg(2+)</name>
        <dbReference type="ChEBI" id="CHEBI:18420"/>
        <label>1</label>
    </ligand>
</feature>
<feature type="binding site" evidence="1">
    <location>
        <begin position="114"/>
        <end position="117"/>
    </location>
    <ligand>
        <name>7,8-dihydropteroate</name>
        <dbReference type="ChEBI" id="CHEBI:17839"/>
    </ligand>
</feature>
<feature type="binding site" evidence="1">
    <location>
        <position position="145"/>
    </location>
    <ligand>
        <name>Mg(2+)</name>
        <dbReference type="ChEBI" id="CHEBI:18420"/>
        <label>1</label>
    </ligand>
</feature>
<feature type="binding site" evidence="1">
    <location>
        <begin position="152"/>
        <end position="154"/>
    </location>
    <ligand>
        <name>7,8-dihydropteroate</name>
        <dbReference type="ChEBI" id="CHEBI:17839"/>
    </ligand>
</feature>
<feature type="binding site" evidence="1">
    <location>
        <position position="172"/>
    </location>
    <ligand>
        <name>Mg(2+)</name>
        <dbReference type="ChEBI" id="CHEBI:18420"/>
        <label>2</label>
    </ligand>
</feature>
<feature type="binding site" evidence="1">
    <location>
        <position position="263"/>
    </location>
    <ligand>
        <name>ATP</name>
        <dbReference type="ChEBI" id="CHEBI:30616"/>
    </ligand>
</feature>
<feature type="binding site" evidence="1">
    <location>
        <position position="302"/>
    </location>
    <ligand>
        <name>ATP</name>
        <dbReference type="ChEBI" id="CHEBI:30616"/>
    </ligand>
</feature>
<feature type="binding site" evidence="1">
    <location>
        <position position="315"/>
    </location>
    <ligand>
        <name>ATP</name>
        <dbReference type="ChEBI" id="CHEBI:30616"/>
    </ligand>
</feature>
<feature type="sequence conflict" description="In Ref. 2; AAA83364." evidence="2" ref="2">
    <original>V</original>
    <variation>M</variation>
    <location>
        <position position="295"/>
    </location>
</feature>
<organism>
    <name type="scientific">Bacillus subtilis (strain 168)</name>
    <dbReference type="NCBI Taxonomy" id="224308"/>
    <lineage>
        <taxon>Bacteria</taxon>
        <taxon>Bacillati</taxon>
        <taxon>Bacillota</taxon>
        <taxon>Bacilli</taxon>
        <taxon>Bacillales</taxon>
        <taxon>Bacillaceae</taxon>
        <taxon>Bacillus</taxon>
    </lineage>
</organism>
<evidence type="ECO:0000250" key="1">
    <source>
        <dbReference type="UniProtKB" id="P08192"/>
    </source>
</evidence>
<evidence type="ECO:0000305" key="2"/>
<dbReference type="EC" id="6.3.2.12"/>
<dbReference type="EC" id="6.3.2.17"/>
<dbReference type="EMBL" id="L04520">
    <property type="protein sequence ID" value="AAB59021.1"/>
    <property type="molecule type" value="Genomic_DNA"/>
</dbReference>
<dbReference type="EMBL" id="AL009126">
    <property type="protein sequence ID" value="CAB14768.1"/>
    <property type="molecule type" value="Genomic_DNA"/>
</dbReference>
<dbReference type="EMBL" id="M30805">
    <property type="protein sequence ID" value="AAA83364.1"/>
    <property type="status" value="ALT_INIT"/>
    <property type="molecule type" value="Genomic_DNA"/>
</dbReference>
<dbReference type="PIR" id="B40646">
    <property type="entry name" value="B40646"/>
</dbReference>
<dbReference type="RefSeq" id="NP_390686.1">
    <property type="nucleotide sequence ID" value="NC_000964.3"/>
</dbReference>
<dbReference type="RefSeq" id="WP_003229640.1">
    <property type="nucleotide sequence ID" value="NZ_OZ025638.1"/>
</dbReference>
<dbReference type="SMR" id="Q05865"/>
<dbReference type="FunCoup" id="Q05865">
    <property type="interactions" value="775"/>
</dbReference>
<dbReference type="STRING" id="224308.BSU28080"/>
<dbReference type="PaxDb" id="224308-BSU28080"/>
<dbReference type="EnsemblBacteria" id="CAB14768">
    <property type="protein sequence ID" value="CAB14768"/>
    <property type="gene ID" value="BSU_28080"/>
</dbReference>
<dbReference type="GeneID" id="936327"/>
<dbReference type="KEGG" id="bsu:BSU28080"/>
<dbReference type="PATRIC" id="fig|224308.179.peg.3050"/>
<dbReference type="eggNOG" id="COG0285">
    <property type="taxonomic scope" value="Bacteria"/>
</dbReference>
<dbReference type="InParanoid" id="Q05865"/>
<dbReference type="OrthoDB" id="9809356at2"/>
<dbReference type="PhylomeDB" id="Q05865"/>
<dbReference type="BioCyc" id="BSUB:BSU28080-MONOMER"/>
<dbReference type="UniPathway" id="UPA00077">
    <property type="reaction ID" value="UER00157"/>
</dbReference>
<dbReference type="UniPathway" id="UPA00850"/>
<dbReference type="Proteomes" id="UP000001570">
    <property type="component" value="Chromosome"/>
</dbReference>
<dbReference type="GO" id="GO:0005737">
    <property type="term" value="C:cytoplasm"/>
    <property type="evidence" value="ECO:0000318"/>
    <property type="project" value="GO_Central"/>
</dbReference>
<dbReference type="GO" id="GO:0005524">
    <property type="term" value="F:ATP binding"/>
    <property type="evidence" value="ECO:0007669"/>
    <property type="project" value="UniProtKB-KW"/>
</dbReference>
<dbReference type="GO" id="GO:0008841">
    <property type="term" value="F:dihydrofolate synthase activity"/>
    <property type="evidence" value="ECO:0000318"/>
    <property type="project" value="GO_Central"/>
</dbReference>
<dbReference type="GO" id="GO:0046872">
    <property type="term" value="F:metal ion binding"/>
    <property type="evidence" value="ECO:0007669"/>
    <property type="project" value="UniProtKB-KW"/>
</dbReference>
<dbReference type="GO" id="GO:0004326">
    <property type="term" value="F:tetrahydrofolylpolyglutamate synthase activity"/>
    <property type="evidence" value="ECO:0000318"/>
    <property type="project" value="GO_Central"/>
</dbReference>
<dbReference type="GO" id="GO:0046656">
    <property type="term" value="P:folic acid biosynthetic process"/>
    <property type="evidence" value="ECO:0007669"/>
    <property type="project" value="UniProtKB-KW"/>
</dbReference>
<dbReference type="GO" id="GO:0009396">
    <property type="term" value="P:folic acid-containing compound biosynthetic process"/>
    <property type="evidence" value="ECO:0000318"/>
    <property type="project" value="GO_Central"/>
</dbReference>
<dbReference type="GO" id="GO:0006730">
    <property type="term" value="P:one-carbon metabolic process"/>
    <property type="evidence" value="ECO:0007669"/>
    <property type="project" value="UniProtKB-KW"/>
</dbReference>
<dbReference type="GO" id="GO:0046654">
    <property type="term" value="P:tetrahydrofolate biosynthetic process"/>
    <property type="evidence" value="ECO:0007669"/>
    <property type="project" value="UniProtKB-UniPathway"/>
</dbReference>
<dbReference type="FunFam" id="3.40.1190.10:FF:000004">
    <property type="entry name" value="Dihydrofolate synthase/folylpolyglutamate synthase"/>
    <property type="match status" value="1"/>
</dbReference>
<dbReference type="Gene3D" id="3.90.190.20">
    <property type="entry name" value="Mur ligase, C-terminal domain"/>
    <property type="match status" value="1"/>
</dbReference>
<dbReference type="Gene3D" id="3.40.1190.10">
    <property type="entry name" value="Mur-like, catalytic domain"/>
    <property type="match status" value="1"/>
</dbReference>
<dbReference type="InterPro" id="IPR001645">
    <property type="entry name" value="Folylpolyglutamate_synth"/>
</dbReference>
<dbReference type="InterPro" id="IPR018109">
    <property type="entry name" value="Folylpolyglutamate_synth_CS"/>
</dbReference>
<dbReference type="InterPro" id="IPR036565">
    <property type="entry name" value="Mur-like_cat_sf"/>
</dbReference>
<dbReference type="InterPro" id="IPR004101">
    <property type="entry name" value="Mur_ligase_C"/>
</dbReference>
<dbReference type="InterPro" id="IPR036615">
    <property type="entry name" value="Mur_ligase_C_dom_sf"/>
</dbReference>
<dbReference type="InterPro" id="IPR013221">
    <property type="entry name" value="Mur_ligase_cen"/>
</dbReference>
<dbReference type="NCBIfam" id="TIGR01499">
    <property type="entry name" value="folC"/>
    <property type="match status" value="1"/>
</dbReference>
<dbReference type="PANTHER" id="PTHR11136:SF0">
    <property type="entry name" value="DIHYDROFOLATE SYNTHETASE-RELATED"/>
    <property type="match status" value="1"/>
</dbReference>
<dbReference type="PANTHER" id="PTHR11136">
    <property type="entry name" value="FOLYLPOLYGLUTAMATE SYNTHASE-RELATED"/>
    <property type="match status" value="1"/>
</dbReference>
<dbReference type="Pfam" id="PF02875">
    <property type="entry name" value="Mur_ligase_C"/>
    <property type="match status" value="1"/>
</dbReference>
<dbReference type="Pfam" id="PF08245">
    <property type="entry name" value="Mur_ligase_M"/>
    <property type="match status" value="1"/>
</dbReference>
<dbReference type="PIRSF" id="PIRSF001563">
    <property type="entry name" value="Folylpolyglu_synth"/>
    <property type="match status" value="1"/>
</dbReference>
<dbReference type="SUPFAM" id="SSF53623">
    <property type="entry name" value="MurD-like peptide ligases, catalytic domain"/>
    <property type="match status" value="1"/>
</dbReference>
<dbReference type="SUPFAM" id="SSF53244">
    <property type="entry name" value="MurD-like peptide ligases, peptide-binding domain"/>
    <property type="match status" value="1"/>
</dbReference>
<dbReference type="PROSITE" id="PS01011">
    <property type="entry name" value="FOLYLPOLYGLU_SYNT_1"/>
    <property type="match status" value="1"/>
</dbReference>
<dbReference type="PROSITE" id="PS01012">
    <property type="entry name" value="FOLYLPOLYGLU_SYNT_2"/>
    <property type="match status" value="1"/>
</dbReference>